<dbReference type="EC" id="2.7.4.3" evidence="3"/>
<dbReference type="EMBL" id="AB050623">
    <property type="protein sequence ID" value="BAB44153.1"/>
    <property type="molecule type" value="mRNA"/>
</dbReference>
<dbReference type="EMBL" id="AE014296">
    <property type="protein sequence ID" value="AAF49942.1"/>
    <property type="molecule type" value="Genomic_DNA"/>
</dbReference>
<dbReference type="EMBL" id="AE014296">
    <property type="protein sequence ID" value="AAN12254.1"/>
    <property type="molecule type" value="Genomic_DNA"/>
</dbReference>
<dbReference type="EMBL" id="AY118287">
    <property type="protein sequence ID" value="AAM48316.1"/>
    <property type="molecule type" value="mRNA"/>
</dbReference>
<dbReference type="EMBL" id="BT012445">
    <property type="protein sequence ID" value="AAS93716.1"/>
    <property type="molecule type" value="mRNA"/>
</dbReference>
<dbReference type="EMBL" id="BT028794">
    <property type="protein sequence ID" value="ABI34175.1"/>
    <property type="molecule type" value="mRNA"/>
</dbReference>
<dbReference type="RefSeq" id="NP_524038.1">
    <molecule id="Q8IQG9-2"/>
    <property type="nucleotide sequence ID" value="NM_079314.3"/>
</dbReference>
<dbReference type="RefSeq" id="NP_729792.1">
    <molecule id="Q8IQG9-1"/>
    <property type="nucleotide sequence ID" value="NM_168493.2"/>
</dbReference>
<dbReference type="SMR" id="Q8IQG9"/>
<dbReference type="FunCoup" id="Q8IQG9">
    <property type="interactions" value="368"/>
</dbReference>
<dbReference type="IntAct" id="Q8IQG9">
    <property type="interactions" value="1"/>
</dbReference>
<dbReference type="STRING" id="7227.FBpp0075750"/>
<dbReference type="PaxDb" id="7227-FBpp0075750"/>
<dbReference type="DNASU" id="39396"/>
<dbReference type="EnsemblMetazoa" id="FBtr0076017">
    <molecule id="Q8IQG9-2"/>
    <property type="protein sequence ID" value="FBpp0075749"/>
    <property type="gene ID" value="FBgn0022709"/>
</dbReference>
<dbReference type="EnsemblMetazoa" id="FBtr0076018">
    <molecule id="Q8IQG9-1"/>
    <property type="protein sequence ID" value="FBpp0075750"/>
    <property type="gene ID" value="FBgn0022709"/>
</dbReference>
<dbReference type="GeneID" id="39396"/>
<dbReference type="KEGG" id="dme:Dmel_CG17146"/>
<dbReference type="UCSC" id="CG17146-RB">
    <molecule id="Q8IQG9-1"/>
    <property type="organism name" value="d. melanogaster"/>
</dbReference>
<dbReference type="AGR" id="FB:FBgn0022709"/>
<dbReference type="CTD" id="203"/>
<dbReference type="FlyBase" id="FBgn0022709">
    <property type="gene designation" value="Ak1"/>
</dbReference>
<dbReference type="VEuPathDB" id="VectorBase:FBgn0022709"/>
<dbReference type="eggNOG" id="KOG3079">
    <property type="taxonomic scope" value="Eukaryota"/>
</dbReference>
<dbReference type="GeneTree" id="ENSGT00940000160589"/>
<dbReference type="HOGENOM" id="CLU_032354_0_3_1"/>
<dbReference type="InParanoid" id="Q8IQG9"/>
<dbReference type="OMA" id="GTQCDRM"/>
<dbReference type="OrthoDB" id="442176at2759"/>
<dbReference type="Reactome" id="R-DME-499943">
    <property type="pathway name" value="Interconversion of nucleotide di- and triphosphates"/>
</dbReference>
<dbReference type="BioGRID-ORCS" id="39396">
    <property type="hits" value="0 hits in 3 CRISPR screens"/>
</dbReference>
<dbReference type="ChiTaRS" id="Adk1">
    <property type="organism name" value="fly"/>
</dbReference>
<dbReference type="Proteomes" id="UP000000803">
    <property type="component" value="Chromosome 3L"/>
</dbReference>
<dbReference type="Bgee" id="FBgn0022709">
    <property type="expression patterns" value="Expressed in oviduct (Drosophila) and 210 other cell types or tissues"/>
</dbReference>
<dbReference type="ExpressionAtlas" id="Q8IQG9">
    <property type="expression patterns" value="baseline and differential"/>
</dbReference>
<dbReference type="GO" id="GO:0005737">
    <property type="term" value="C:cytoplasm"/>
    <property type="evidence" value="ECO:0000250"/>
    <property type="project" value="FlyBase"/>
</dbReference>
<dbReference type="GO" id="GO:0005829">
    <property type="term" value="C:cytosol"/>
    <property type="evidence" value="ECO:0000318"/>
    <property type="project" value="GO_Central"/>
</dbReference>
<dbReference type="GO" id="GO:0005634">
    <property type="term" value="C:nucleus"/>
    <property type="evidence" value="ECO:0000250"/>
    <property type="project" value="FlyBase"/>
</dbReference>
<dbReference type="GO" id="GO:0004017">
    <property type="term" value="F:adenylate kinase activity"/>
    <property type="evidence" value="ECO:0000314"/>
    <property type="project" value="FlyBase"/>
</dbReference>
<dbReference type="GO" id="GO:0005524">
    <property type="term" value="F:ATP binding"/>
    <property type="evidence" value="ECO:0007669"/>
    <property type="project" value="UniProtKB-KW"/>
</dbReference>
<dbReference type="GO" id="GO:0033862">
    <property type="term" value="F:UMP kinase activity"/>
    <property type="evidence" value="ECO:0007669"/>
    <property type="project" value="UniProtKB-EC"/>
</dbReference>
<dbReference type="GO" id="GO:0009041">
    <property type="term" value="F:UMP/dUMP kinase activity"/>
    <property type="evidence" value="ECO:0000250"/>
    <property type="project" value="FlyBase"/>
</dbReference>
<dbReference type="GO" id="GO:0006207">
    <property type="term" value="P:'de novo' pyrimidine nucleobase biosynthetic process"/>
    <property type="evidence" value="ECO:0000250"/>
    <property type="project" value="FlyBase"/>
</dbReference>
<dbReference type="GO" id="GO:0046034">
    <property type="term" value="P:ATP metabolic process"/>
    <property type="evidence" value="ECO:0007669"/>
    <property type="project" value="InterPro"/>
</dbReference>
<dbReference type="GO" id="GO:0006139">
    <property type="term" value="P:nucleobase-containing compound metabolic process"/>
    <property type="evidence" value="ECO:0000250"/>
    <property type="project" value="FlyBase"/>
</dbReference>
<dbReference type="CDD" id="cd01428">
    <property type="entry name" value="ADK"/>
    <property type="match status" value="1"/>
</dbReference>
<dbReference type="FunFam" id="3.40.50.300:FF:000315">
    <property type="entry name" value="Adenylate kinase 1"/>
    <property type="match status" value="1"/>
</dbReference>
<dbReference type="Gene3D" id="3.40.50.300">
    <property type="entry name" value="P-loop containing nucleotide triphosphate hydrolases"/>
    <property type="match status" value="1"/>
</dbReference>
<dbReference type="HAMAP" id="MF_00235">
    <property type="entry name" value="Adenylate_kinase_Adk"/>
    <property type="match status" value="1"/>
</dbReference>
<dbReference type="InterPro" id="IPR000850">
    <property type="entry name" value="Adenylat/UMP-CMP_kin"/>
</dbReference>
<dbReference type="InterPro" id="IPR033690">
    <property type="entry name" value="Adenylat_kinase_CS"/>
</dbReference>
<dbReference type="InterPro" id="IPR006267">
    <property type="entry name" value="AK1/5"/>
</dbReference>
<dbReference type="InterPro" id="IPR027417">
    <property type="entry name" value="P-loop_NTPase"/>
</dbReference>
<dbReference type="NCBIfam" id="TIGR01360">
    <property type="entry name" value="aden_kin_iso1"/>
    <property type="match status" value="1"/>
</dbReference>
<dbReference type="PANTHER" id="PTHR23359">
    <property type="entry name" value="NUCLEOTIDE KINASE"/>
    <property type="match status" value="1"/>
</dbReference>
<dbReference type="Pfam" id="PF00406">
    <property type="entry name" value="ADK"/>
    <property type="match status" value="1"/>
</dbReference>
<dbReference type="PRINTS" id="PR00094">
    <property type="entry name" value="ADENYLTKNASE"/>
</dbReference>
<dbReference type="SUPFAM" id="SSF52540">
    <property type="entry name" value="P-loop containing nucleoside triphosphate hydrolases"/>
    <property type="match status" value="1"/>
</dbReference>
<dbReference type="PROSITE" id="PS00113">
    <property type="entry name" value="ADENYLATE_KINASE"/>
    <property type="match status" value="1"/>
</dbReference>
<comment type="function">
    <text evidence="1 3">Catalyzes the reversible transfer of the terminal phosphate group between ATP and AMP (PubMed:19416704). Plays an important role in cellular energy homeostasis and in adenine nucleotide metabolism (By similarity).</text>
</comment>
<comment type="catalytic activity">
    <reaction evidence="3">
        <text>AMP + ATP = 2 ADP</text>
        <dbReference type="Rhea" id="RHEA:12973"/>
        <dbReference type="ChEBI" id="CHEBI:30616"/>
        <dbReference type="ChEBI" id="CHEBI:456215"/>
        <dbReference type="ChEBI" id="CHEBI:456216"/>
        <dbReference type="EC" id="2.7.4.3"/>
    </reaction>
</comment>
<comment type="subcellular location">
    <subcellularLocation>
        <location evidence="2">Cytoplasm</location>
    </subcellularLocation>
</comment>
<comment type="alternative products">
    <event type="alternative splicing"/>
    <isoform>
        <id>Q8IQG9-1</id>
        <name evidence="11">B</name>
        <sequence type="displayed"/>
    </isoform>
    <isoform>
        <id>Q8IQG9-2</id>
        <name evidence="11">A</name>
        <sequence type="described" ref="VSP_062420"/>
    </isoform>
</comment>
<comment type="tissue specificity">
    <text evidence="3">High expression levels in the thorax, suggesting a possible function in the gastrointestinal or reproductive systems.</text>
</comment>
<comment type="developmental stage">
    <text evidence="3">Expressed in larvae and adults but at very low levels in embryos.</text>
</comment>
<comment type="disruption phenotype">
    <text evidence="4">RNAi-mediated knockdown has no effect on viability.</text>
</comment>
<comment type="similarity">
    <text evidence="1">Belongs to the adenylate kinase family. AK1 subfamily.</text>
</comment>
<keyword id="KW-0025">Alternative splicing</keyword>
<keyword id="KW-0067">ATP-binding</keyword>
<keyword id="KW-0963">Cytoplasm</keyword>
<keyword id="KW-0418">Kinase</keyword>
<keyword id="KW-0547">Nucleotide-binding</keyword>
<keyword id="KW-0597">Phosphoprotein</keyword>
<keyword id="KW-1185">Reference proteome</keyword>
<keyword id="KW-0808">Transferase</keyword>
<accession>Q8IQG9</accession>
<accession>Q9VTV3</accession>
<name>KAD1_DROME</name>
<feature type="chain" id="PRO_0000461204" description="Adenylate kinase 1">
    <location>
        <begin position="1"/>
        <end position="229"/>
    </location>
</feature>
<feature type="binding site" evidence="1">
    <location>
        <begin position="42"/>
        <end position="47"/>
    </location>
    <ligand>
        <name>ATP</name>
        <dbReference type="ChEBI" id="CHEBI:30616"/>
    </ligand>
</feature>
<feature type="binding site" evidence="1">
    <location>
        <position position="63"/>
    </location>
    <ligand>
        <name>AMP</name>
        <dbReference type="ChEBI" id="CHEBI:456215"/>
    </ligand>
</feature>
<feature type="binding site" evidence="1">
    <location>
        <position position="68"/>
    </location>
    <ligand>
        <name>AMP</name>
        <dbReference type="ChEBI" id="CHEBI:456215"/>
    </ligand>
</feature>
<feature type="binding site" evidence="1">
    <location>
        <begin position="118"/>
        <end position="121"/>
    </location>
    <ligand>
        <name>AMP</name>
        <dbReference type="ChEBI" id="CHEBI:456215"/>
    </ligand>
</feature>
<feature type="binding site" evidence="1">
    <location>
        <position position="125"/>
    </location>
    <ligand>
        <name>AMP</name>
        <dbReference type="ChEBI" id="CHEBI:456215"/>
    </ligand>
</feature>
<feature type="binding site" evidence="1">
    <location>
        <position position="156"/>
    </location>
    <ligand>
        <name>ATP</name>
        <dbReference type="ChEBI" id="CHEBI:30616"/>
    </ligand>
</feature>
<feature type="binding site" evidence="1">
    <location>
        <position position="164"/>
    </location>
    <ligand>
        <name>AMP</name>
        <dbReference type="ChEBI" id="CHEBI:456215"/>
    </ligand>
</feature>
<feature type="binding site" evidence="1">
    <location>
        <position position="175"/>
    </location>
    <ligand>
        <name>AMP</name>
        <dbReference type="ChEBI" id="CHEBI:456215"/>
    </ligand>
</feature>
<feature type="modified residue" description="Phosphoserine" evidence="1">
    <location>
        <position position="62"/>
    </location>
</feature>
<feature type="splice variant" id="VSP_062420" description="In isoform A.">
    <original>MLFMCHQRVMKKEAEEKLKAEELRRARAA</original>
    <variation>M</variation>
    <location>
        <begin position="1"/>
        <end position="29"/>
    </location>
</feature>
<reference evidence="10" key="1">
    <citation type="journal article" date="2009" name="Comp. Biochem. Physiol.">
        <title>Adenylate kinase isozyme 2 is essential for growth and development of Drosophila melanogaster.</title>
        <authorList>
            <person name="Fujisawa K."/>
            <person name="Murakami R."/>
            <person name="Horiguchi T."/>
            <person name="Noma T."/>
        </authorList>
    </citation>
    <scope>NUCLEOTIDE SEQUENCE [MRNA] (ISOFORM A)</scope>
    <scope>FUNCTION</scope>
    <scope>CATALYTIC ACTIVITY</scope>
    <scope>TISSUE SPECIFICITY</scope>
    <scope>DEVELOPMENTAL STAGE</scope>
</reference>
<reference evidence="12" key="2">
    <citation type="journal article" date="2000" name="Science">
        <title>The genome sequence of Drosophila melanogaster.</title>
        <authorList>
            <person name="Adams M.D."/>
            <person name="Celniker S.E."/>
            <person name="Holt R.A."/>
            <person name="Evans C.A."/>
            <person name="Gocayne J.D."/>
            <person name="Amanatides P.G."/>
            <person name="Scherer S.E."/>
            <person name="Li P.W."/>
            <person name="Hoskins R.A."/>
            <person name="Galle R.F."/>
            <person name="George R.A."/>
            <person name="Lewis S.E."/>
            <person name="Richards S."/>
            <person name="Ashburner M."/>
            <person name="Henderson S.N."/>
            <person name="Sutton G.G."/>
            <person name="Wortman J.R."/>
            <person name="Yandell M.D."/>
            <person name="Zhang Q."/>
            <person name="Chen L.X."/>
            <person name="Brandon R.C."/>
            <person name="Rogers Y.-H.C."/>
            <person name="Blazej R.G."/>
            <person name="Champe M."/>
            <person name="Pfeiffer B.D."/>
            <person name="Wan K.H."/>
            <person name="Doyle C."/>
            <person name="Baxter E.G."/>
            <person name="Helt G."/>
            <person name="Nelson C.R."/>
            <person name="Miklos G.L.G."/>
            <person name="Abril J.F."/>
            <person name="Agbayani A."/>
            <person name="An H.-J."/>
            <person name="Andrews-Pfannkoch C."/>
            <person name="Baldwin D."/>
            <person name="Ballew R.M."/>
            <person name="Basu A."/>
            <person name="Baxendale J."/>
            <person name="Bayraktaroglu L."/>
            <person name="Beasley E.M."/>
            <person name="Beeson K.Y."/>
            <person name="Benos P.V."/>
            <person name="Berman B.P."/>
            <person name="Bhandari D."/>
            <person name="Bolshakov S."/>
            <person name="Borkova D."/>
            <person name="Botchan M.R."/>
            <person name="Bouck J."/>
            <person name="Brokstein P."/>
            <person name="Brottier P."/>
            <person name="Burtis K.C."/>
            <person name="Busam D.A."/>
            <person name="Butler H."/>
            <person name="Cadieu E."/>
            <person name="Center A."/>
            <person name="Chandra I."/>
            <person name="Cherry J.M."/>
            <person name="Cawley S."/>
            <person name="Dahlke C."/>
            <person name="Davenport L.B."/>
            <person name="Davies P."/>
            <person name="de Pablos B."/>
            <person name="Delcher A."/>
            <person name="Deng Z."/>
            <person name="Mays A.D."/>
            <person name="Dew I."/>
            <person name="Dietz S.M."/>
            <person name="Dodson K."/>
            <person name="Doup L.E."/>
            <person name="Downes M."/>
            <person name="Dugan-Rocha S."/>
            <person name="Dunkov B.C."/>
            <person name="Dunn P."/>
            <person name="Durbin K.J."/>
            <person name="Evangelista C.C."/>
            <person name="Ferraz C."/>
            <person name="Ferriera S."/>
            <person name="Fleischmann W."/>
            <person name="Fosler C."/>
            <person name="Gabrielian A.E."/>
            <person name="Garg N.S."/>
            <person name="Gelbart W.M."/>
            <person name="Glasser K."/>
            <person name="Glodek A."/>
            <person name="Gong F."/>
            <person name="Gorrell J.H."/>
            <person name="Gu Z."/>
            <person name="Guan P."/>
            <person name="Harris M."/>
            <person name="Harris N.L."/>
            <person name="Harvey D.A."/>
            <person name="Heiman T.J."/>
            <person name="Hernandez J.R."/>
            <person name="Houck J."/>
            <person name="Hostin D."/>
            <person name="Houston K.A."/>
            <person name="Howland T.J."/>
            <person name="Wei M.-H."/>
            <person name="Ibegwam C."/>
            <person name="Jalali M."/>
            <person name="Kalush F."/>
            <person name="Karpen G.H."/>
            <person name="Ke Z."/>
            <person name="Kennison J.A."/>
            <person name="Ketchum K.A."/>
            <person name="Kimmel B.E."/>
            <person name="Kodira C.D."/>
            <person name="Kraft C.L."/>
            <person name="Kravitz S."/>
            <person name="Kulp D."/>
            <person name="Lai Z."/>
            <person name="Lasko P."/>
            <person name="Lei Y."/>
            <person name="Levitsky A.A."/>
            <person name="Li J.H."/>
            <person name="Li Z."/>
            <person name="Liang Y."/>
            <person name="Lin X."/>
            <person name="Liu X."/>
            <person name="Mattei B."/>
            <person name="McIntosh T.C."/>
            <person name="McLeod M.P."/>
            <person name="McPherson D."/>
            <person name="Merkulov G."/>
            <person name="Milshina N.V."/>
            <person name="Mobarry C."/>
            <person name="Morris J."/>
            <person name="Moshrefi A."/>
            <person name="Mount S.M."/>
            <person name="Moy M."/>
            <person name="Murphy B."/>
            <person name="Murphy L."/>
            <person name="Muzny D.M."/>
            <person name="Nelson D.L."/>
            <person name="Nelson D.R."/>
            <person name="Nelson K.A."/>
            <person name="Nixon K."/>
            <person name="Nusskern D.R."/>
            <person name="Pacleb J.M."/>
            <person name="Palazzolo M."/>
            <person name="Pittman G.S."/>
            <person name="Pan S."/>
            <person name="Pollard J."/>
            <person name="Puri V."/>
            <person name="Reese M.G."/>
            <person name="Reinert K."/>
            <person name="Remington K."/>
            <person name="Saunders R.D.C."/>
            <person name="Scheeler F."/>
            <person name="Shen H."/>
            <person name="Shue B.C."/>
            <person name="Siden-Kiamos I."/>
            <person name="Simpson M."/>
            <person name="Skupski M.P."/>
            <person name="Smith T.J."/>
            <person name="Spier E."/>
            <person name="Spradling A.C."/>
            <person name="Stapleton M."/>
            <person name="Strong R."/>
            <person name="Sun E."/>
            <person name="Svirskas R."/>
            <person name="Tector C."/>
            <person name="Turner R."/>
            <person name="Venter E."/>
            <person name="Wang A.H."/>
            <person name="Wang X."/>
            <person name="Wang Z.-Y."/>
            <person name="Wassarman D.A."/>
            <person name="Weinstock G.M."/>
            <person name="Weissenbach J."/>
            <person name="Williams S.M."/>
            <person name="Woodage T."/>
            <person name="Worley K.C."/>
            <person name="Wu D."/>
            <person name="Yang S."/>
            <person name="Yao Q.A."/>
            <person name="Ye J."/>
            <person name="Yeh R.-F."/>
            <person name="Zaveri J.S."/>
            <person name="Zhan M."/>
            <person name="Zhang G."/>
            <person name="Zhao Q."/>
            <person name="Zheng L."/>
            <person name="Zheng X.H."/>
            <person name="Zhong F.N."/>
            <person name="Zhong W."/>
            <person name="Zhou X."/>
            <person name="Zhu S.C."/>
            <person name="Zhu X."/>
            <person name="Smith H.O."/>
            <person name="Gibbs R.A."/>
            <person name="Myers E.W."/>
            <person name="Rubin G.M."/>
            <person name="Venter J.C."/>
        </authorList>
    </citation>
    <scope>NUCLEOTIDE SEQUENCE [LARGE SCALE GENOMIC DNA]</scope>
    <source>
        <strain evidence="12">Berkeley</strain>
    </source>
</reference>
<reference evidence="12" key="3">
    <citation type="journal article" date="2002" name="Genome Biol.">
        <title>Annotation of the Drosophila melanogaster euchromatic genome: a systematic review.</title>
        <authorList>
            <person name="Misra S."/>
            <person name="Crosby M.A."/>
            <person name="Mungall C.J."/>
            <person name="Matthews B.B."/>
            <person name="Campbell K.S."/>
            <person name="Hradecky P."/>
            <person name="Huang Y."/>
            <person name="Kaminker J.S."/>
            <person name="Millburn G.H."/>
            <person name="Prochnik S.E."/>
            <person name="Smith C.D."/>
            <person name="Tupy J.L."/>
            <person name="Whitfield E.J."/>
            <person name="Bayraktaroglu L."/>
            <person name="Berman B.P."/>
            <person name="Bettencourt B.R."/>
            <person name="Celniker S.E."/>
            <person name="de Grey A.D.N.J."/>
            <person name="Drysdale R.A."/>
            <person name="Harris N.L."/>
            <person name="Richter J."/>
            <person name="Russo S."/>
            <person name="Schroeder A.J."/>
            <person name="Shu S.Q."/>
            <person name="Stapleton M."/>
            <person name="Yamada C."/>
            <person name="Ashburner M."/>
            <person name="Gelbart W.M."/>
            <person name="Rubin G.M."/>
            <person name="Lewis S.E."/>
        </authorList>
    </citation>
    <scope>GENOME REANNOTATION</scope>
    <source>
        <strain evidence="12">Berkeley</strain>
    </source>
</reference>
<reference evidence="7" key="4">
    <citation type="journal article" date="2002" name="Genome Biol.">
        <title>A Drosophila full-length cDNA resource.</title>
        <authorList>
            <person name="Stapleton M."/>
            <person name="Carlson J.W."/>
            <person name="Brokstein P."/>
            <person name="Yu C."/>
            <person name="Champe M."/>
            <person name="George R.A."/>
            <person name="Guarin H."/>
            <person name="Kronmiller B."/>
            <person name="Pacleb J.M."/>
            <person name="Park S."/>
            <person name="Wan K.H."/>
            <person name="Rubin G.M."/>
            <person name="Celniker S.E."/>
        </authorList>
    </citation>
    <scope>NUCLEOTIDE SEQUENCE [LARGE SCALE MRNA] (ISOFORM A)</scope>
    <source>
        <strain evidence="7">Berkeley</strain>
        <tissue evidence="7">Testis</tissue>
    </source>
</reference>
<reference evidence="8 9" key="5">
    <citation type="submission" date="2006-08" db="EMBL/GenBank/DDBJ databases">
        <authorList>
            <person name="Stapleton M."/>
            <person name="Carlson J."/>
            <person name="Chavez C."/>
            <person name="Frise E."/>
            <person name="George R."/>
            <person name="Pacleb J."/>
            <person name="Park S."/>
            <person name="Wan K."/>
            <person name="Yu C."/>
            <person name="Rubin G.M."/>
            <person name="Celniker S."/>
        </authorList>
    </citation>
    <scope>NUCLEOTIDE SEQUENCE [LARGE SCALE MRNA] (ISOFORM B)</scope>
    <source>
        <strain evidence="8 9">Berkeley</strain>
    </source>
</reference>
<reference key="6">
    <citation type="journal article" date="2014" name="J. Med. Invest.">
        <title>Adenylate kinase 2 deficiency limits survival and regulates various genes during larval stages of Drosophila melanogaster.</title>
        <authorList>
            <person name="Horiguchi T."/>
            <person name="Fuka M."/>
            <person name="Fujisawa K."/>
            <person name="Tanimura A."/>
            <person name="Miyoshi K."/>
            <person name="Murakami R."/>
            <person name="Noma T."/>
        </authorList>
    </citation>
    <scope>DISRUPTION PHENOTYPE</scope>
</reference>
<gene>
    <name evidence="11" type="primary">Ak1</name>
    <name evidence="11" type="synonym">Adk1</name>
    <name evidence="5 11" type="synonym">Dak1</name>
    <name evidence="11" type="ORF">CG17146</name>
</gene>
<proteinExistence type="evidence at protein level"/>
<organism evidence="12">
    <name type="scientific">Drosophila melanogaster</name>
    <name type="common">Fruit fly</name>
    <dbReference type="NCBI Taxonomy" id="7227"/>
    <lineage>
        <taxon>Eukaryota</taxon>
        <taxon>Metazoa</taxon>
        <taxon>Ecdysozoa</taxon>
        <taxon>Arthropoda</taxon>
        <taxon>Hexapoda</taxon>
        <taxon>Insecta</taxon>
        <taxon>Pterygota</taxon>
        <taxon>Neoptera</taxon>
        <taxon>Endopterygota</taxon>
        <taxon>Diptera</taxon>
        <taxon>Brachycera</taxon>
        <taxon>Muscomorpha</taxon>
        <taxon>Ephydroidea</taxon>
        <taxon>Drosophilidae</taxon>
        <taxon>Drosophila</taxon>
        <taxon>Sophophora</taxon>
    </lineage>
</organism>
<protein>
    <recommendedName>
        <fullName evidence="11">Adenylate kinase 1</fullName>
        <ecNumber evidence="3">2.7.4.3</ecNumber>
    </recommendedName>
    <alternativeName>
        <fullName evidence="6">ATP-AMP transphosphorylase Ak1</fullName>
    </alternativeName>
</protein>
<sequence length="229" mass="25279">MLFMCHQRVMKKEAEEKLKAEELRRARAAADIPIIWILGGPGCGKGTQCAKIVEKYGFTHLSSGDLLRNEVASGSDKGRQLQAVMASGGLVSNDEVLSLLNDAITRAKGSSKGFLIDGYPRQKNQGIEFEARIAPADLALYFECSEDTMVQRIMARAAASAVKRDDDNEKTIRARLLTFKQNTNAILELYEPKTLTINAERDVDDIFLEVVQAIDCVLKKKQQNAAAQC</sequence>
<evidence type="ECO:0000250" key="1">
    <source>
        <dbReference type="UniProtKB" id="P00568"/>
    </source>
</evidence>
<evidence type="ECO:0000250" key="2">
    <source>
        <dbReference type="UniProtKB" id="P05081"/>
    </source>
</evidence>
<evidence type="ECO:0000269" key="3">
    <source>
    </source>
</evidence>
<evidence type="ECO:0000269" key="4">
    <source>
    </source>
</evidence>
<evidence type="ECO:0000303" key="5">
    <source>
    </source>
</evidence>
<evidence type="ECO:0000305" key="6"/>
<evidence type="ECO:0000312" key="7">
    <source>
        <dbReference type="EMBL" id="AAM48316.1"/>
    </source>
</evidence>
<evidence type="ECO:0000312" key="8">
    <source>
        <dbReference type="EMBL" id="AAS93716.1"/>
    </source>
</evidence>
<evidence type="ECO:0000312" key="9">
    <source>
        <dbReference type="EMBL" id="ABI34175.1"/>
    </source>
</evidence>
<evidence type="ECO:0000312" key="10">
    <source>
        <dbReference type="EMBL" id="BAB44153.1"/>
    </source>
</evidence>
<evidence type="ECO:0000312" key="11">
    <source>
        <dbReference type="FlyBase" id="FBgn0022709"/>
    </source>
</evidence>
<evidence type="ECO:0000312" key="12">
    <source>
        <dbReference type="Proteomes" id="UP000000803"/>
    </source>
</evidence>